<proteinExistence type="inferred from homology"/>
<accession>P0AEH7</accession>
<accession>P52084</accession>
<accession>Q47010</accession>
<name>ELAB_ECO57</name>
<reference key="1">
    <citation type="journal article" date="2001" name="Nature">
        <title>Genome sequence of enterohaemorrhagic Escherichia coli O157:H7.</title>
        <authorList>
            <person name="Perna N.T."/>
            <person name="Plunkett G. III"/>
            <person name="Burland V."/>
            <person name="Mau B."/>
            <person name="Glasner J.D."/>
            <person name="Rose D.J."/>
            <person name="Mayhew G.F."/>
            <person name="Evans P.S."/>
            <person name="Gregor J."/>
            <person name="Kirkpatrick H.A."/>
            <person name="Posfai G."/>
            <person name="Hackett J."/>
            <person name="Klink S."/>
            <person name="Boutin A."/>
            <person name="Shao Y."/>
            <person name="Miller L."/>
            <person name="Grotbeck E.J."/>
            <person name="Davis N.W."/>
            <person name="Lim A."/>
            <person name="Dimalanta E.T."/>
            <person name="Potamousis K."/>
            <person name="Apodaca J."/>
            <person name="Anantharaman T.S."/>
            <person name="Lin J."/>
            <person name="Yen G."/>
            <person name="Schwartz D.C."/>
            <person name="Welch R.A."/>
            <person name="Blattner F.R."/>
        </authorList>
    </citation>
    <scope>NUCLEOTIDE SEQUENCE [LARGE SCALE GENOMIC DNA]</scope>
    <source>
        <strain>O157:H7 / EDL933 / ATCC 700927 / EHEC</strain>
    </source>
</reference>
<reference key="2">
    <citation type="journal article" date="2001" name="DNA Res.">
        <title>Complete genome sequence of enterohemorrhagic Escherichia coli O157:H7 and genomic comparison with a laboratory strain K-12.</title>
        <authorList>
            <person name="Hayashi T."/>
            <person name="Makino K."/>
            <person name="Ohnishi M."/>
            <person name="Kurokawa K."/>
            <person name="Ishii K."/>
            <person name="Yokoyama K."/>
            <person name="Han C.-G."/>
            <person name="Ohtsubo E."/>
            <person name="Nakayama K."/>
            <person name="Murata T."/>
            <person name="Tanaka M."/>
            <person name="Tobe T."/>
            <person name="Iida T."/>
            <person name="Takami H."/>
            <person name="Honda T."/>
            <person name="Sasakawa C."/>
            <person name="Ogasawara N."/>
            <person name="Yasunaga T."/>
            <person name="Kuhara S."/>
            <person name="Shiba T."/>
            <person name="Hattori M."/>
            <person name="Shinagawa H."/>
        </authorList>
    </citation>
    <scope>NUCLEOTIDE SEQUENCE [LARGE SCALE GENOMIC DNA]</scope>
    <source>
        <strain>O157:H7 / Sakai / RIMD 0509952 / EHEC</strain>
    </source>
</reference>
<organism>
    <name type="scientific">Escherichia coli O157:H7</name>
    <dbReference type="NCBI Taxonomy" id="83334"/>
    <lineage>
        <taxon>Bacteria</taxon>
        <taxon>Pseudomonadati</taxon>
        <taxon>Pseudomonadota</taxon>
        <taxon>Gammaproteobacteria</taxon>
        <taxon>Enterobacterales</taxon>
        <taxon>Enterobacteriaceae</taxon>
        <taxon>Escherichia</taxon>
    </lineage>
</organism>
<gene>
    <name type="primary">elaB</name>
    <name type="ordered locus">Z3526</name>
    <name type="ordered locus">ECs3154</name>
</gene>
<sequence>MSNQFGDTRIDDDLTLLSETLEEVLRSSGDPADQKYVELKARAEKALDDVKKRVSQASDSYYYRAKQAVYRADDYVHEKPWQGIGVGAAVGLVLGLLLARR</sequence>
<dbReference type="EMBL" id="AE005174">
    <property type="protein sequence ID" value="AAG57399.1"/>
    <property type="molecule type" value="Genomic_DNA"/>
</dbReference>
<dbReference type="EMBL" id="BA000007">
    <property type="protein sequence ID" value="BAB36577.1"/>
    <property type="molecule type" value="Genomic_DNA"/>
</dbReference>
<dbReference type="PIR" id="B91023">
    <property type="entry name" value="B91023"/>
</dbReference>
<dbReference type="PIR" id="C85867">
    <property type="entry name" value="C85867"/>
</dbReference>
<dbReference type="RefSeq" id="NP_311181.1">
    <property type="nucleotide sequence ID" value="NC_002695.1"/>
</dbReference>
<dbReference type="RefSeq" id="WP_000070621.1">
    <property type="nucleotide sequence ID" value="NZ_VOAI01000001.1"/>
</dbReference>
<dbReference type="SMR" id="P0AEH7"/>
<dbReference type="STRING" id="155864.Z3526"/>
<dbReference type="GeneID" id="75205683"/>
<dbReference type="GeneID" id="916862"/>
<dbReference type="KEGG" id="ece:Z3526"/>
<dbReference type="KEGG" id="ecs:ECs_3154"/>
<dbReference type="PATRIC" id="fig|386585.9.peg.3291"/>
<dbReference type="eggNOG" id="COG4575">
    <property type="taxonomic scope" value="Bacteria"/>
</dbReference>
<dbReference type="HOGENOM" id="CLU_132623_0_2_6"/>
<dbReference type="OMA" id="YVQENPW"/>
<dbReference type="Proteomes" id="UP000000558">
    <property type="component" value="Chromosome"/>
</dbReference>
<dbReference type="Proteomes" id="UP000002519">
    <property type="component" value="Chromosome"/>
</dbReference>
<dbReference type="GO" id="GO:0005886">
    <property type="term" value="C:plasma membrane"/>
    <property type="evidence" value="ECO:0007669"/>
    <property type="project" value="UniProtKB-SubCell"/>
</dbReference>
<dbReference type="GO" id="GO:0043022">
    <property type="term" value="F:ribosome binding"/>
    <property type="evidence" value="ECO:0007669"/>
    <property type="project" value="InterPro"/>
</dbReference>
<dbReference type="InterPro" id="IPR043605">
    <property type="entry name" value="DUF883_C"/>
</dbReference>
<dbReference type="InterPro" id="IPR043604">
    <property type="entry name" value="DUF883_N"/>
</dbReference>
<dbReference type="InterPro" id="IPR010279">
    <property type="entry name" value="YqjD/ElaB"/>
</dbReference>
<dbReference type="NCBIfam" id="NF007709">
    <property type="entry name" value="PRK10404.1"/>
    <property type="match status" value="1"/>
</dbReference>
<dbReference type="PANTHER" id="PTHR35893">
    <property type="entry name" value="INNER MEMBRANE PROTEIN-RELATED"/>
    <property type="match status" value="1"/>
</dbReference>
<dbReference type="PANTHER" id="PTHR35893:SF1">
    <property type="entry name" value="PROTEIN ELAB"/>
    <property type="match status" value="1"/>
</dbReference>
<dbReference type="Pfam" id="PF05957">
    <property type="entry name" value="DUF883"/>
    <property type="match status" value="1"/>
</dbReference>
<dbReference type="Pfam" id="PF19029">
    <property type="entry name" value="DUF883_C"/>
    <property type="match status" value="1"/>
</dbReference>
<keyword id="KW-0007">Acetylation</keyword>
<keyword id="KW-0997">Cell inner membrane</keyword>
<keyword id="KW-1003">Cell membrane</keyword>
<keyword id="KW-0472">Membrane</keyword>
<keyword id="KW-1185">Reference proteome</keyword>
<keyword id="KW-0812">Transmembrane</keyword>
<keyword id="KW-1133">Transmembrane helix</keyword>
<evidence type="ECO:0000250" key="1"/>
<evidence type="ECO:0000255" key="2"/>
<evidence type="ECO:0000305" key="3"/>
<protein>
    <recommendedName>
        <fullName>Protein ElaB</fullName>
    </recommendedName>
</protein>
<feature type="chain" id="PRO_0000086948" description="Protein ElaB">
    <location>
        <begin position="1"/>
        <end position="101"/>
    </location>
</feature>
<feature type="transmembrane region" description="Helical" evidence="2">
    <location>
        <begin position="80"/>
        <end position="99"/>
    </location>
</feature>
<feature type="modified residue" description="N6-acetyllysine" evidence="1">
    <location>
        <position position="35"/>
    </location>
</feature>
<comment type="subunit">
    <text evidence="1">May bind to ribosomes.</text>
</comment>
<comment type="subcellular location">
    <subcellularLocation>
        <location evidence="3">Cell inner membrane</location>
        <topology evidence="3">Single-pass membrane protein</topology>
    </subcellularLocation>
</comment>
<comment type="similarity">
    <text evidence="3">Belongs to the ElaB/YgaM/YqjD family.</text>
</comment>